<proteinExistence type="inferred from homology"/>
<name>GVPA_ANCAQ</name>
<comment type="function">
    <text evidence="2">Gas vesicles are hollow, gas filled proteinaceous nanostructures found in some microorganisms. During planktonic growth they allow positioning of the organism at a favorable depth for light or nutrient acquisition. GvpA forms the protein shell.</text>
</comment>
<comment type="subunit">
    <text evidence="2">The gas vesicle shell is 2 nm thick and consists of a single layer of this protein. It forms helical ribs nearly perpendicular to the long axis of the vesicle.</text>
</comment>
<comment type="subcellular location">
    <subcellularLocation>
        <location evidence="2">Gas vesicle shell</location>
    </subcellularLocation>
</comment>
<comment type="miscellaneous">
    <text evidence="3">During exponential growth cells contain about 75 gas vesicles measuring 250 x 100 nm. Gas vesicles are cylindrical with conic ends. They collapse by centrifugation (12000 x g for 10 minutes at 4 degrees Celsius); upon resuspension small biconical gas vesicles start to form within 5 minutes. They grow until they are 100 x 100 nm when they start to elongate.</text>
</comment>
<comment type="similarity">
    <text evidence="2">Belongs to the gas vesicle GvpA family.</text>
</comment>
<gene>
    <name evidence="2 4" type="primary">gvpA</name>
</gene>
<evidence type="ECO:0000250" key="1"/>
<evidence type="ECO:0000255" key="2">
    <source>
        <dbReference type="HAMAP-Rule" id="MF_00576"/>
    </source>
</evidence>
<evidence type="ECO:0000269" key="3">
    <source>
    </source>
</evidence>
<evidence type="ECO:0000303" key="4">
    <source ref="1"/>
</evidence>
<sequence length="70" mass="7271">MAVEKINASSSLAEVVDRILDKGVVVDAWVRVSLVGIELLAVEARVVVAGVDTYLKYAEAVGLTASAQAA</sequence>
<reference key="1">
    <citation type="submission" date="1998-08" db="EMBL/GenBank/DDBJ databases">
        <title>The gvpA, C and N genes encoding gas vesicle proteins in Ancylobacter aquaticus.</title>
        <authorList>
            <person name="Buchholz B.E.E."/>
            <person name="Martindale J."/>
            <person name="Hayes P.K."/>
        </authorList>
    </citation>
    <scope>NUCLEOTIDE SEQUENCE [GENOMIC DNA]</scope>
    <source>
        <strain>M100</strain>
    </source>
</reference>
<reference key="2">
    <citation type="journal article" date="1975" name="J. Bacteriol.">
        <title>Gas vesicle assembly in Microcyclus aquaticus.</title>
        <authorList>
            <person name="Konopka A.E."/>
            <person name="Staley J.T."/>
            <person name="Lara J.C."/>
        </authorList>
    </citation>
    <scope>GAS VESICLE FORMATION</scope>
    <source>
        <strain>ATCC 27068 / M / S1</strain>
    </source>
</reference>
<keyword id="KW-0304">Gas vesicle</keyword>
<dbReference type="EMBL" id="AF087458">
    <property type="protein sequence ID" value="AAF16863.1"/>
    <property type="molecule type" value="Genomic_DNA"/>
</dbReference>
<dbReference type="SMR" id="Q9RH31"/>
<dbReference type="OrthoDB" id="284387at2"/>
<dbReference type="GO" id="GO:0033172">
    <property type="term" value="C:gas vesicle shell"/>
    <property type="evidence" value="ECO:0007669"/>
    <property type="project" value="UniProtKB-UniRule"/>
</dbReference>
<dbReference type="GO" id="GO:0012506">
    <property type="term" value="C:vesicle membrane"/>
    <property type="evidence" value="ECO:0007669"/>
    <property type="project" value="InterPro"/>
</dbReference>
<dbReference type="GO" id="GO:0005198">
    <property type="term" value="F:structural molecule activity"/>
    <property type="evidence" value="ECO:0007669"/>
    <property type="project" value="InterPro"/>
</dbReference>
<dbReference type="HAMAP" id="MF_00576">
    <property type="entry name" value="Gas_vesicle_A"/>
    <property type="match status" value="1"/>
</dbReference>
<dbReference type="InterPro" id="IPR000638">
    <property type="entry name" value="Gas-vesicle_GvpA-like"/>
</dbReference>
<dbReference type="InterPro" id="IPR047870">
    <property type="entry name" value="Gas_vesicle_GvpA"/>
</dbReference>
<dbReference type="InterPro" id="IPR050530">
    <property type="entry name" value="GvpA"/>
</dbReference>
<dbReference type="InterPro" id="IPR018493">
    <property type="entry name" value="GvpA-like_CS"/>
</dbReference>
<dbReference type="NCBIfam" id="NF006874">
    <property type="entry name" value="PRK09371.1"/>
    <property type="match status" value="1"/>
</dbReference>
<dbReference type="PANTHER" id="PTHR35344:SF4">
    <property type="entry name" value="GAS VESICLE PROTEIN A1"/>
    <property type="match status" value="1"/>
</dbReference>
<dbReference type="PANTHER" id="PTHR35344">
    <property type="entry name" value="GAS VESICLE STRUCTURAL PROTEIN 2-RELATED"/>
    <property type="match status" value="1"/>
</dbReference>
<dbReference type="Pfam" id="PF00741">
    <property type="entry name" value="Gas_vesicle"/>
    <property type="match status" value="1"/>
</dbReference>
<dbReference type="PROSITE" id="PS00234">
    <property type="entry name" value="GAS_VESICLE_A_1"/>
    <property type="match status" value="1"/>
</dbReference>
<dbReference type="PROSITE" id="PS00669">
    <property type="entry name" value="GAS_VESICLE_A_2"/>
    <property type="match status" value="1"/>
</dbReference>
<feature type="initiator methionine" description="Removed" evidence="1">
    <location>
        <position position="1"/>
    </location>
</feature>
<feature type="chain" id="PRO_0000199980" description="Gas vesicle protein A">
    <location>
        <begin position="2"/>
        <end position="70"/>
    </location>
</feature>
<protein>
    <recommendedName>
        <fullName evidence="2">Gas vesicle protein A</fullName>
        <shortName evidence="2">GvpA</shortName>
    </recommendedName>
</protein>
<accession>Q9RH31</accession>
<organism>
    <name type="scientific">Ancylobacter aquaticus</name>
    <dbReference type="NCBI Taxonomy" id="100"/>
    <lineage>
        <taxon>Bacteria</taxon>
        <taxon>Pseudomonadati</taxon>
        <taxon>Pseudomonadota</taxon>
        <taxon>Alphaproteobacteria</taxon>
        <taxon>Hyphomicrobiales</taxon>
        <taxon>Xanthobacteraceae</taxon>
        <taxon>Ancylobacter</taxon>
    </lineage>
</organism>